<proteinExistence type="inferred from homology"/>
<organism>
    <name type="scientific">Cupriavidus taiwanensis (strain DSM 17343 / BCRC 17206 / CCUG 44338 / CIP 107171 / LMG 19424 / R1)</name>
    <name type="common">Ralstonia taiwanensis (strain LMG 19424)</name>
    <dbReference type="NCBI Taxonomy" id="977880"/>
    <lineage>
        <taxon>Bacteria</taxon>
        <taxon>Pseudomonadati</taxon>
        <taxon>Pseudomonadota</taxon>
        <taxon>Betaproteobacteria</taxon>
        <taxon>Burkholderiales</taxon>
        <taxon>Burkholderiaceae</taxon>
        <taxon>Cupriavidus</taxon>
    </lineage>
</organism>
<feature type="chain" id="PRO_1000136934" description="Cell division protein ZapD">
    <location>
        <begin position="1"/>
        <end position="252"/>
    </location>
</feature>
<accession>B3R8A8</accession>
<evidence type="ECO:0000255" key="1">
    <source>
        <dbReference type="HAMAP-Rule" id="MF_01092"/>
    </source>
</evidence>
<keyword id="KW-0131">Cell cycle</keyword>
<keyword id="KW-0132">Cell division</keyword>
<keyword id="KW-0963">Cytoplasm</keyword>
<keyword id="KW-0717">Septation</keyword>
<protein>
    <recommendedName>
        <fullName evidence="1">Cell division protein ZapD</fullName>
    </recommendedName>
    <alternativeName>
        <fullName evidence="1">Z ring-associated protein D</fullName>
    </alternativeName>
</protein>
<gene>
    <name evidence="1" type="primary">zapD</name>
    <name type="ordered locus">RALTA_A2714</name>
</gene>
<reference key="1">
    <citation type="journal article" date="2008" name="Genome Res.">
        <title>Genome sequence of the beta-rhizobium Cupriavidus taiwanensis and comparative genomics of rhizobia.</title>
        <authorList>
            <person name="Amadou C."/>
            <person name="Pascal G."/>
            <person name="Mangenot S."/>
            <person name="Glew M."/>
            <person name="Bontemps C."/>
            <person name="Capela D."/>
            <person name="Carrere S."/>
            <person name="Cruveiller S."/>
            <person name="Dossat C."/>
            <person name="Lajus A."/>
            <person name="Marchetti M."/>
            <person name="Poinsot V."/>
            <person name="Rouy Z."/>
            <person name="Servin B."/>
            <person name="Saad M."/>
            <person name="Schenowitz C."/>
            <person name="Barbe V."/>
            <person name="Batut J."/>
            <person name="Medigue C."/>
            <person name="Masson-Boivin C."/>
        </authorList>
    </citation>
    <scope>NUCLEOTIDE SEQUENCE [LARGE SCALE GENOMIC DNA]</scope>
    <source>
        <strain>DSM 17343 / BCRC 17206 / CCUG 44338 / CIP 107171 / LMG 19424 / R1</strain>
    </source>
</reference>
<dbReference type="EMBL" id="CU633749">
    <property type="protein sequence ID" value="CAQ70644.1"/>
    <property type="molecule type" value="Genomic_DNA"/>
</dbReference>
<dbReference type="RefSeq" id="WP_012353939.1">
    <property type="nucleotide sequence ID" value="NC_010528.1"/>
</dbReference>
<dbReference type="SMR" id="B3R8A8"/>
<dbReference type="GeneID" id="29762660"/>
<dbReference type="KEGG" id="cti:RALTA_A2714"/>
<dbReference type="eggNOG" id="COG4582">
    <property type="taxonomic scope" value="Bacteria"/>
</dbReference>
<dbReference type="HOGENOM" id="CLU_076303_0_1_4"/>
<dbReference type="BioCyc" id="CTAI977880:RALTA_RS13205-MONOMER"/>
<dbReference type="Proteomes" id="UP000001692">
    <property type="component" value="Chromosome 1"/>
</dbReference>
<dbReference type="GO" id="GO:0032153">
    <property type="term" value="C:cell division site"/>
    <property type="evidence" value="ECO:0007669"/>
    <property type="project" value="TreeGrafter"/>
</dbReference>
<dbReference type="GO" id="GO:0005737">
    <property type="term" value="C:cytoplasm"/>
    <property type="evidence" value="ECO:0007669"/>
    <property type="project" value="UniProtKB-SubCell"/>
</dbReference>
<dbReference type="GO" id="GO:0000917">
    <property type="term" value="P:division septum assembly"/>
    <property type="evidence" value="ECO:0007669"/>
    <property type="project" value="UniProtKB-KW"/>
</dbReference>
<dbReference type="GO" id="GO:0043093">
    <property type="term" value="P:FtsZ-dependent cytokinesis"/>
    <property type="evidence" value="ECO:0007669"/>
    <property type="project" value="UniProtKB-UniRule"/>
</dbReference>
<dbReference type="Gene3D" id="1.10.3900.10">
    <property type="entry name" value="YacF-like"/>
    <property type="match status" value="1"/>
</dbReference>
<dbReference type="Gene3D" id="2.60.440.10">
    <property type="entry name" value="YacF-like domains"/>
    <property type="match status" value="1"/>
</dbReference>
<dbReference type="HAMAP" id="MF_01092">
    <property type="entry name" value="ZapD"/>
    <property type="match status" value="1"/>
</dbReference>
<dbReference type="InterPro" id="IPR009777">
    <property type="entry name" value="ZapD"/>
</dbReference>
<dbReference type="InterPro" id="IPR027462">
    <property type="entry name" value="ZapD_C"/>
</dbReference>
<dbReference type="InterPro" id="IPR036268">
    <property type="entry name" value="ZapD_sf"/>
</dbReference>
<dbReference type="NCBIfam" id="NF003656">
    <property type="entry name" value="PRK05287.1-4"/>
    <property type="match status" value="1"/>
</dbReference>
<dbReference type="PANTHER" id="PTHR39455">
    <property type="entry name" value="CELL DIVISION PROTEIN ZAPD"/>
    <property type="match status" value="1"/>
</dbReference>
<dbReference type="PANTHER" id="PTHR39455:SF1">
    <property type="entry name" value="CELL DIVISION PROTEIN ZAPD"/>
    <property type="match status" value="1"/>
</dbReference>
<dbReference type="Pfam" id="PF07072">
    <property type="entry name" value="ZapD"/>
    <property type="match status" value="1"/>
</dbReference>
<dbReference type="SUPFAM" id="SSF160950">
    <property type="entry name" value="YacF-like"/>
    <property type="match status" value="1"/>
</dbReference>
<comment type="function">
    <text evidence="1">Cell division factor that enhances FtsZ-ring assembly. Directly interacts with FtsZ and promotes bundling of FtsZ protofilaments, with a reduction in FtsZ GTPase activity.</text>
</comment>
<comment type="subunit">
    <text evidence="1">Interacts with FtsZ.</text>
</comment>
<comment type="subcellular location">
    <subcellularLocation>
        <location evidence="1">Cytoplasm</location>
    </subcellularLocation>
    <text evidence="1">Localizes to mid-cell in an FtsZ-dependent manner.</text>
</comment>
<comment type="similarity">
    <text evidence="1">Belongs to the ZapD family.</text>
</comment>
<sequence length="252" mass="28871">MILYEYPFNERIRTLLRLEDLFDRLEYFLGQDHAQQHHVALTTLFEIIDVAGRADLKTDLIKELERQRQALAPLRANPQIDQDALDSVIGEIEQGIAMLNQTVGKAGQLLTDNEWLTSIRSRAIIPGGTCEFDLPAYYAWQHRPAEDRRADILKWARPLVSLRMGTTIVLRLLREAGQSGKVIATGGSYQQMLSGRSYQLMQVYLDDSLLAFIPEMSANKYMLWVRFTQQDGDLRPRSVDADIPFLLKLCNF</sequence>
<name>ZAPD_CUPTR</name>